<protein>
    <recommendedName>
        <fullName evidence="1">Adenine phosphoribosyltransferase</fullName>
        <shortName evidence="1">APRT</shortName>
        <ecNumber evidence="1">2.4.2.7</ecNumber>
    </recommendedName>
</protein>
<comment type="function">
    <text evidence="1">Catalyzes a salvage reaction resulting in the formation of AMP, that is energically less costly than de novo synthesis.</text>
</comment>
<comment type="catalytic activity">
    <reaction evidence="1">
        <text>AMP + diphosphate = 5-phospho-alpha-D-ribose 1-diphosphate + adenine</text>
        <dbReference type="Rhea" id="RHEA:16609"/>
        <dbReference type="ChEBI" id="CHEBI:16708"/>
        <dbReference type="ChEBI" id="CHEBI:33019"/>
        <dbReference type="ChEBI" id="CHEBI:58017"/>
        <dbReference type="ChEBI" id="CHEBI:456215"/>
        <dbReference type="EC" id="2.4.2.7"/>
    </reaction>
</comment>
<comment type="pathway">
    <text evidence="1">Purine metabolism; AMP biosynthesis via salvage pathway; AMP from adenine: step 1/1.</text>
</comment>
<comment type="subunit">
    <text evidence="1">Homodimer.</text>
</comment>
<comment type="subcellular location">
    <subcellularLocation>
        <location evidence="1">Cytoplasm</location>
    </subcellularLocation>
</comment>
<comment type="similarity">
    <text evidence="1">Belongs to the purine/pyrimidine phosphoribosyltransferase family.</text>
</comment>
<reference key="1">
    <citation type="journal article" date="2003" name="Microbiology">
        <title>The complete genome sequence of the avian pathogen Mycoplasma gallisepticum strain R(low).</title>
        <authorList>
            <person name="Papazisi L."/>
            <person name="Gorton T.S."/>
            <person name="Kutish G."/>
            <person name="Markham P.F."/>
            <person name="Browning G.F."/>
            <person name="Nguyen D.K."/>
            <person name="Swartzell S."/>
            <person name="Madan A."/>
            <person name="Mahairas G."/>
            <person name="Geary S.J."/>
        </authorList>
    </citation>
    <scope>NUCLEOTIDE SEQUENCE [LARGE SCALE GENOMIC DNA]</scope>
    <source>
        <strain>R(low / passage 15 / clone 2)</strain>
    </source>
</reference>
<evidence type="ECO:0000255" key="1">
    <source>
        <dbReference type="HAMAP-Rule" id="MF_00004"/>
    </source>
</evidence>
<gene>
    <name evidence="1" type="primary">apt</name>
    <name type="ordered locus">MYCGA1890</name>
    <name type="ORF">MGA_0955</name>
</gene>
<proteinExistence type="inferred from homology"/>
<accession>Q7NBS4</accession>
<feature type="chain" id="PRO_0000149410" description="Adenine phosphoribosyltransferase">
    <location>
        <begin position="1"/>
        <end position="178"/>
    </location>
</feature>
<name>APT_MYCGA</name>
<sequence>MKTELIAQLKKTIITVKDFPKPGILFYDITPILLDPKLFDQVISVMAEVAKKSNADMIASPESRGFLFGVPLANKLKLPFVLVRKQNKLPRATFSASYDLEYGKNNVIEIHQDAIKPNSKVMIVDDLLATAGTVDAISRLVKQAKSEVVSYSFLIRLKDLGGIDKLDQTKPIDYILEY</sequence>
<dbReference type="EC" id="2.4.2.7" evidence="1"/>
<dbReference type="EMBL" id="AE015450">
    <property type="protein sequence ID" value="AAP56539.1"/>
    <property type="molecule type" value="Genomic_DNA"/>
</dbReference>
<dbReference type="RefSeq" id="WP_011113421.1">
    <property type="nucleotide sequence ID" value="NC_004829.2"/>
</dbReference>
<dbReference type="SMR" id="Q7NBS4"/>
<dbReference type="KEGG" id="mga:MGA_0955"/>
<dbReference type="HOGENOM" id="CLU_063339_3_3_14"/>
<dbReference type="OrthoDB" id="9803963at2"/>
<dbReference type="UniPathway" id="UPA00588">
    <property type="reaction ID" value="UER00646"/>
</dbReference>
<dbReference type="Proteomes" id="UP000001418">
    <property type="component" value="Chromosome"/>
</dbReference>
<dbReference type="GO" id="GO:0005737">
    <property type="term" value="C:cytoplasm"/>
    <property type="evidence" value="ECO:0007669"/>
    <property type="project" value="UniProtKB-SubCell"/>
</dbReference>
<dbReference type="GO" id="GO:0002055">
    <property type="term" value="F:adenine binding"/>
    <property type="evidence" value="ECO:0007669"/>
    <property type="project" value="TreeGrafter"/>
</dbReference>
<dbReference type="GO" id="GO:0003999">
    <property type="term" value="F:adenine phosphoribosyltransferase activity"/>
    <property type="evidence" value="ECO:0007669"/>
    <property type="project" value="UniProtKB-UniRule"/>
</dbReference>
<dbReference type="GO" id="GO:0016208">
    <property type="term" value="F:AMP binding"/>
    <property type="evidence" value="ECO:0007669"/>
    <property type="project" value="TreeGrafter"/>
</dbReference>
<dbReference type="GO" id="GO:0006168">
    <property type="term" value="P:adenine salvage"/>
    <property type="evidence" value="ECO:0007669"/>
    <property type="project" value="InterPro"/>
</dbReference>
<dbReference type="GO" id="GO:0044209">
    <property type="term" value="P:AMP salvage"/>
    <property type="evidence" value="ECO:0007669"/>
    <property type="project" value="UniProtKB-UniRule"/>
</dbReference>
<dbReference type="GO" id="GO:0006166">
    <property type="term" value="P:purine ribonucleoside salvage"/>
    <property type="evidence" value="ECO:0007669"/>
    <property type="project" value="UniProtKB-KW"/>
</dbReference>
<dbReference type="CDD" id="cd06223">
    <property type="entry name" value="PRTases_typeI"/>
    <property type="match status" value="1"/>
</dbReference>
<dbReference type="FunFam" id="3.40.50.2020:FF:000004">
    <property type="entry name" value="Adenine phosphoribosyltransferase"/>
    <property type="match status" value="1"/>
</dbReference>
<dbReference type="Gene3D" id="3.40.50.2020">
    <property type="match status" value="1"/>
</dbReference>
<dbReference type="HAMAP" id="MF_00004">
    <property type="entry name" value="Aden_phosphoribosyltr"/>
    <property type="match status" value="1"/>
</dbReference>
<dbReference type="InterPro" id="IPR005764">
    <property type="entry name" value="Ade_phspho_trans"/>
</dbReference>
<dbReference type="InterPro" id="IPR000836">
    <property type="entry name" value="PRibTrfase_dom"/>
</dbReference>
<dbReference type="InterPro" id="IPR029057">
    <property type="entry name" value="PRTase-like"/>
</dbReference>
<dbReference type="InterPro" id="IPR050054">
    <property type="entry name" value="UPRTase/APRTase"/>
</dbReference>
<dbReference type="NCBIfam" id="TIGR01090">
    <property type="entry name" value="apt"/>
    <property type="match status" value="1"/>
</dbReference>
<dbReference type="NCBIfam" id="NF002634">
    <property type="entry name" value="PRK02304.1-3"/>
    <property type="match status" value="1"/>
</dbReference>
<dbReference type="NCBIfam" id="NF002636">
    <property type="entry name" value="PRK02304.1-5"/>
    <property type="match status" value="1"/>
</dbReference>
<dbReference type="PANTHER" id="PTHR32315">
    <property type="entry name" value="ADENINE PHOSPHORIBOSYLTRANSFERASE"/>
    <property type="match status" value="1"/>
</dbReference>
<dbReference type="PANTHER" id="PTHR32315:SF3">
    <property type="entry name" value="ADENINE PHOSPHORIBOSYLTRANSFERASE"/>
    <property type="match status" value="1"/>
</dbReference>
<dbReference type="Pfam" id="PF00156">
    <property type="entry name" value="Pribosyltran"/>
    <property type="match status" value="1"/>
</dbReference>
<dbReference type="SUPFAM" id="SSF53271">
    <property type="entry name" value="PRTase-like"/>
    <property type="match status" value="1"/>
</dbReference>
<dbReference type="PROSITE" id="PS00103">
    <property type="entry name" value="PUR_PYR_PR_TRANSFER"/>
    <property type="match status" value="1"/>
</dbReference>
<organism>
    <name type="scientific">Mycoplasmoides gallisepticum (strain R(low / passage 15 / clone 2))</name>
    <name type="common">Mycoplasma gallisepticum</name>
    <dbReference type="NCBI Taxonomy" id="710127"/>
    <lineage>
        <taxon>Bacteria</taxon>
        <taxon>Bacillati</taxon>
        <taxon>Mycoplasmatota</taxon>
        <taxon>Mycoplasmoidales</taxon>
        <taxon>Mycoplasmoidaceae</taxon>
        <taxon>Mycoplasmoides</taxon>
    </lineage>
</organism>
<keyword id="KW-0963">Cytoplasm</keyword>
<keyword id="KW-0328">Glycosyltransferase</keyword>
<keyword id="KW-0660">Purine salvage</keyword>
<keyword id="KW-1185">Reference proteome</keyword>
<keyword id="KW-0808">Transferase</keyword>